<keyword id="KW-0472">Membrane</keyword>
<keyword id="KW-0496">Mitochondrion</keyword>
<keyword id="KW-0999">Mitochondrion inner membrane</keyword>
<keyword id="KW-1185">Reference proteome</keyword>
<keyword id="KW-0809">Transit peptide</keyword>
<proteinExistence type="evidence at protein level"/>
<reference key="1">
    <citation type="journal article" date="1997" name="Nature">
        <title>The nucleotide sequence of Saccharomyces cerevisiae chromosome XIII.</title>
        <authorList>
            <person name="Bowman S."/>
            <person name="Churcher C.M."/>
            <person name="Badcock K."/>
            <person name="Brown D."/>
            <person name="Chillingworth T."/>
            <person name="Connor R."/>
            <person name="Dedman K."/>
            <person name="Devlin K."/>
            <person name="Gentles S."/>
            <person name="Hamlin N."/>
            <person name="Hunt S."/>
            <person name="Jagels K."/>
            <person name="Lye G."/>
            <person name="Moule S."/>
            <person name="Odell C."/>
            <person name="Pearson D."/>
            <person name="Rajandream M.A."/>
            <person name="Rice P."/>
            <person name="Skelton J."/>
            <person name="Walsh S.V."/>
            <person name="Whitehead S."/>
            <person name="Barrell B.G."/>
        </authorList>
    </citation>
    <scope>NUCLEOTIDE SEQUENCE [LARGE SCALE GENOMIC DNA]</scope>
    <source>
        <strain>ATCC 204508 / S288c</strain>
    </source>
</reference>
<reference key="2">
    <citation type="journal article" date="2014" name="G3 (Bethesda)">
        <title>The reference genome sequence of Saccharomyces cerevisiae: Then and now.</title>
        <authorList>
            <person name="Engel S.R."/>
            <person name="Dietrich F.S."/>
            <person name="Fisk D.G."/>
            <person name="Binkley G."/>
            <person name="Balakrishnan R."/>
            <person name="Costanzo M.C."/>
            <person name="Dwight S.S."/>
            <person name="Hitz B.C."/>
            <person name="Karra K."/>
            <person name="Nash R.S."/>
            <person name="Weng S."/>
            <person name="Wong E.D."/>
            <person name="Lloyd P."/>
            <person name="Skrzypek M.S."/>
            <person name="Miyasato S.R."/>
            <person name="Simison M."/>
            <person name="Cherry J.M."/>
        </authorList>
    </citation>
    <scope>GENOME REANNOTATION</scope>
    <source>
        <strain>ATCC 204508 / S288c</strain>
    </source>
</reference>
<reference key="3">
    <citation type="journal article" date="2003" name="Nature">
        <title>Global analysis of protein localization in budding yeast.</title>
        <authorList>
            <person name="Huh W.-K."/>
            <person name="Falvo J.V."/>
            <person name="Gerke L.C."/>
            <person name="Carroll A.S."/>
            <person name="Howson R.W."/>
            <person name="Weissman J.S."/>
            <person name="O'Shea E.K."/>
        </authorList>
    </citation>
    <scope>SUBCELLULAR LOCATION [LARGE SCALE ANALYSIS]</scope>
</reference>
<reference key="4">
    <citation type="journal article" date="2003" name="Nature">
        <title>Global analysis of protein expression in yeast.</title>
        <authorList>
            <person name="Ghaemmaghami S."/>
            <person name="Huh W.-K."/>
            <person name="Bower K."/>
            <person name="Howson R.W."/>
            <person name="Belle A."/>
            <person name="Dephoure N."/>
            <person name="O'Shea E.K."/>
            <person name="Weissman J.S."/>
        </authorList>
    </citation>
    <scope>LEVEL OF PROTEIN EXPRESSION [LARGE SCALE ANALYSIS]</scope>
</reference>
<reference key="5">
    <citation type="journal article" date="2006" name="J. Proteome Res.">
        <title>Toward the complete yeast mitochondrial proteome: multidimensional separation techniques for mitochondrial proteomics.</title>
        <authorList>
            <person name="Reinders J."/>
            <person name="Zahedi R.P."/>
            <person name="Pfanner N."/>
            <person name="Meisinger C."/>
            <person name="Sickmann A."/>
        </authorList>
    </citation>
    <scope>SUBCELLULAR LOCATION [LARGE SCALE ANALYSIS]</scope>
    <scope>IDENTIFICATION BY MASS SPECTROMETRY</scope>
</reference>
<reference key="6">
    <citation type="journal article" date="2008" name="Mol. Biol. Cell">
        <title>ATP25, a new nuclear gene of Saccharomyces cerevisiae required for expression and assembly of the Atp9p subunit of mitochondrial ATPase.</title>
        <authorList>
            <person name="Zeng X."/>
            <person name="Barros M.H."/>
            <person name="Shulman T."/>
            <person name="Tzagoloff A."/>
        </authorList>
    </citation>
    <scope>FUNCTION</scope>
    <scope>SUBCELLULAR LOCATION</scope>
</reference>
<comment type="function">
    <text evidence="5">mRNA stabilization factor specific for the 0.95 kb OLI1 mRNA. Also involved in OLI1 ring formation.</text>
</comment>
<comment type="subcellular location">
    <subcellularLocation>
        <location evidence="2 4 5">Mitochondrion inner membrane</location>
        <topology evidence="2 4 5">Peripheral membrane protein</topology>
        <orientation evidence="2 4 5">Matrix side</orientation>
    </subcellularLocation>
</comment>
<comment type="miscellaneous">
    <text evidence="3">Present with 2430 molecules/cell in log phase SD medium.</text>
</comment>
<comment type="similarity">
    <text evidence="6">Belongs to the ATP25 family.</text>
</comment>
<dbReference type="EMBL" id="Z49807">
    <property type="protein sequence ID" value="CAA89899.1"/>
    <property type="molecule type" value="Genomic_DNA"/>
</dbReference>
<dbReference type="EMBL" id="BK006946">
    <property type="protein sequence ID" value="DAA09995.1"/>
    <property type="molecule type" value="Genomic_DNA"/>
</dbReference>
<dbReference type="PIR" id="S55084">
    <property type="entry name" value="S55084"/>
</dbReference>
<dbReference type="RefSeq" id="NP_013816.1">
    <property type="nucleotide sequence ID" value="NM_001182598.1"/>
</dbReference>
<dbReference type="SMR" id="Q03153"/>
<dbReference type="BioGRID" id="35273">
    <property type="interactions" value="82"/>
</dbReference>
<dbReference type="FunCoup" id="Q03153">
    <property type="interactions" value="107"/>
</dbReference>
<dbReference type="IntAct" id="Q03153">
    <property type="interactions" value="58"/>
</dbReference>
<dbReference type="MINT" id="Q03153"/>
<dbReference type="STRING" id="4932.YMR098C"/>
<dbReference type="GlyGen" id="Q03153">
    <property type="glycosylation" value="1 site"/>
</dbReference>
<dbReference type="PaxDb" id="4932-YMR098C"/>
<dbReference type="PeptideAtlas" id="Q03153"/>
<dbReference type="EnsemblFungi" id="YMR098C_mRNA">
    <property type="protein sequence ID" value="YMR098C"/>
    <property type="gene ID" value="YMR098C"/>
</dbReference>
<dbReference type="GeneID" id="855123"/>
<dbReference type="KEGG" id="sce:YMR098C"/>
<dbReference type="AGR" id="SGD:S000004704"/>
<dbReference type="SGD" id="S000004704">
    <property type="gene designation" value="ATP25"/>
</dbReference>
<dbReference type="VEuPathDB" id="FungiDB:YMR098C"/>
<dbReference type="eggNOG" id="ENOG502RGZN">
    <property type="taxonomic scope" value="Eukaryota"/>
</dbReference>
<dbReference type="HOGENOM" id="CLU_487522_0_0_1"/>
<dbReference type="InParanoid" id="Q03153"/>
<dbReference type="OMA" id="SWYMIDC"/>
<dbReference type="OrthoDB" id="107372at2759"/>
<dbReference type="BioCyc" id="YEAST:G3O-32798-MONOMER"/>
<dbReference type="BioGRID-ORCS" id="855123">
    <property type="hits" value="0 hits in 10 CRISPR screens"/>
</dbReference>
<dbReference type="PRO" id="PR:Q03153"/>
<dbReference type="Proteomes" id="UP000002311">
    <property type="component" value="Chromosome XIII"/>
</dbReference>
<dbReference type="RNAct" id="Q03153">
    <property type="molecule type" value="protein"/>
</dbReference>
<dbReference type="GO" id="GO:0005743">
    <property type="term" value="C:mitochondrial inner membrane"/>
    <property type="evidence" value="ECO:0000314"/>
    <property type="project" value="SGD"/>
</dbReference>
<dbReference type="GO" id="GO:0005739">
    <property type="term" value="C:mitochondrion"/>
    <property type="evidence" value="ECO:0007005"/>
    <property type="project" value="SGD"/>
</dbReference>
<dbReference type="GO" id="GO:0140053">
    <property type="term" value="P:mitochondrial gene expression"/>
    <property type="evidence" value="ECO:0007669"/>
    <property type="project" value="InterPro"/>
</dbReference>
<dbReference type="GO" id="GO:0033615">
    <property type="term" value="P:mitochondrial proton-transporting ATP synthase complex assembly"/>
    <property type="evidence" value="ECO:0000315"/>
    <property type="project" value="SGD"/>
</dbReference>
<dbReference type="GO" id="GO:0048255">
    <property type="term" value="P:mRNA stabilization"/>
    <property type="evidence" value="ECO:0000315"/>
    <property type="project" value="SGD"/>
</dbReference>
<dbReference type="Gene3D" id="3.30.460.10">
    <property type="entry name" value="Beta Polymerase, domain 2"/>
    <property type="match status" value="1"/>
</dbReference>
<dbReference type="InterPro" id="IPR040152">
    <property type="entry name" value="Atp25"/>
</dbReference>
<dbReference type="InterPro" id="IPR025210">
    <property type="entry name" value="ATP25_mRNA_stabil_dom"/>
</dbReference>
<dbReference type="InterPro" id="IPR043519">
    <property type="entry name" value="NT_sf"/>
</dbReference>
<dbReference type="PANTHER" id="PTHR28087">
    <property type="entry name" value="ATPASE SYNTHESIS PROTEIN 25, MITOCHONDRIAL"/>
    <property type="match status" value="1"/>
</dbReference>
<dbReference type="PANTHER" id="PTHR28087:SF1">
    <property type="entry name" value="ATPASE SYNTHESIS PROTEIN 25, MITOCHONDRIAL"/>
    <property type="match status" value="1"/>
</dbReference>
<dbReference type="Pfam" id="PF13929">
    <property type="entry name" value="mRNA_stabil"/>
    <property type="match status" value="1"/>
</dbReference>
<dbReference type="Pfam" id="PF02410">
    <property type="entry name" value="RsfS"/>
    <property type="match status" value="1"/>
</dbReference>
<dbReference type="SUPFAM" id="SSF81301">
    <property type="entry name" value="Nucleotidyltransferase"/>
    <property type="match status" value="1"/>
</dbReference>
<organism>
    <name type="scientific">Saccharomyces cerevisiae (strain ATCC 204508 / S288c)</name>
    <name type="common">Baker's yeast</name>
    <dbReference type="NCBI Taxonomy" id="559292"/>
    <lineage>
        <taxon>Eukaryota</taxon>
        <taxon>Fungi</taxon>
        <taxon>Dikarya</taxon>
        <taxon>Ascomycota</taxon>
        <taxon>Saccharomycotina</taxon>
        <taxon>Saccharomycetes</taxon>
        <taxon>Saccharomycetales</taxon>
        <taxon>Saccharomycetaceae</taxon>
        <taxon>Saccharomyces</taxon>
    </lineage>
</organism>
<accession>Q03153</accession>
<accession>D6VZS1</accession>
<gene>
    <name type="primary">ATP25</name>
    <name type="ordered locus">YMR098C</name>
    <name type="ORF">YM6543.05C</name>
</gene>
<name>ATP25_YEAST</name>
<protein>
    <recommendedName>
        <fullName>ATPase synthesis protein 25, mitochondrial</fullName>
    </recommendedName>
    <alternativeName>
        <fullName>OLI1 mRNA stabilization factor</fullName>
    </alternativeName>
</protein>
<evidence type="ECO:0000255" key="1"/>
<evidence type="ECO:0000269" key="2">
    <source>
    </source>
</evidence>
<evidence type="ECO:0000269" key="3">
    <source>
    </source>
</evidence>
<evidence type="ECO:0000269" key="4">
    <source>
    </source>
</evidence>
<evidence type="ECO:0000269" key="5">
    <source>
    </source>
</evidence>
<evidence type="ECO:0000305" key="6"/>
<sequence length="612" mass="70414">MNKFCLLPFHGKRIGVANIPFTILFKKGPYFLHSHITAVYYSTKGKNDSHEQSRVSKKSTFTPLETPWYLRIVDNEKELMEGKKNNHHTMNKELEIPKTSPNSLRKIADLLTGKLGLDDFLVFDLRKKSPNSVSAVNKLGDFMVICTARSTKHCHKSFLELNKFLKHEFCSSAYVEGNFNERQESRRKRRLARKSNLSKLLGRSSECSAKDLNSEAWYMIDCRVDGIFVNILTQRRRNELNLEELYAPENEKSKFQNIDSGNVPTISGVNEISSNNNILLGLRRLAQQRRRYSTINPNGLSNLRYFLQKEDFKGANKIIQSSSGTETHNIRTLEHVKNTLKDLVGQERKVDVVQWKSLFDEHSTFLTINQSAAYWPLRLEYAILLNKADPQFYSDRVFLKDYLLLKKSLGQELIREDLIALLEMVLKTQHSSHSYFNLVKQNRVIIRALNLFKGLQTEDDGSVVYDEVVISLLLNSMVADERVKLRSLYETIDHIFQTFGDKLTSGMIVSILQNLAKIKDWNKLLQVWEAITPTEGEGQDKRPWNEFINVINQSGDSHVISKIVNNGHLLWIRRLNVNVTPELCNSIKALLKTAGMENSTLEEFLVRGTNNQ</sequence>
<feature type="transit peptide" description="Mitochondrion" evidence="1">
    <location>
        <begin position="1"/>
        <end position="14"/>
    </location>
</feature>
<feature type="chain" id="PRO_0000203288" description="ATPase synthesis protein 25, mitochondrial">
    <location>
        <begin position="15"/>
        <end position="612"/>
    </location>
</feature>